<accession>A9IMA6</accession>
<reference key="1">
    <citation type="journal article" date="2007" name="Nat. Genet.">
        <title>Genomic analysis of Bartonella identifies type IV secretion systems as host adaptability factors.</title>
        <authorList>
            <person name="Saenz H.L."/>
            <person name="Engel P."/>
            <person name="Stoeckli M.C."/>
            <person name="Lanz C."/>
            <person name="Raddatz G."/>
            <person name="Vayssier-Taussat M."/>
            <person name="Birtles R."/>
            <person name="Schuster S.C."/>
            <person name="Dehio C."/>
        </authorList>
    </citation>
    <scope>NUCLEOTIDE SEQUENCE [LARGE SCALE GENOMIC DNA]</scope>
    <source>
        <strain>CIP 105476 / IBS 506</strain>
    </source>
</reference>
<evidence type="ECO:0000255" key="1">
    <source>
        <dbReference type="HAMAP-Rule" id="MF_01454"/>
    </source>
</evidence>
<evidence type="ECO:0000255" key="2">
    <source>
        <dbReference type="PROSITE-ProRule" id="PRU01231"/>
    </source>
</evidence>
<gene>
    <name evidence="1" type="primary">obg</name>
    <name type="ordered locus">BT_0172</name>
</gene>
<proteinExistence type="inferred from homology"/>
<organism>
    <name type="scientific">Bartonella tribocorum (strain CIP 105476 / IBS 506)</name>
    <dbReference type="NCBI Taxonomy" id="382640"/>
    <lineage>
        <taxon>Bacteria</taxon>
        <taxon>Pseudomonadati</taxon>
        <taxon>Pseudomonadota</taxon>
        <taxon>Alphaproteobacteria</taxon>
        <taxon>Hyphomicrobiales</taxon>
        <taxon>Bartonellaceae</taxon>
        <taxon>Bartonella</taxon>
    </lineage>
</organism>
<name>OBG_BART1</name>
<protein>
    <recommendedName>
        <fullName evidence="1">GTPase Obg</fullName>
        <ecNumber evidence="1">3.6.5.-</ecNumber>
    </recommendedName>
    <alternativeName>
        <fullName evidence="1">GTP-binding protein Obg</fullName>
    </alternativeName>
</protein>
<dbReference type="EC" id="3.6.5.-" evidence="1"/>
<dbReference type="EMBL" id="AM260525">
    <property type="protein sequence ID" value="CAK00656.1"/>
    <property type="molecule type" value="Genomic_DNA"/>
</dbReference>
<dbReference type="RefSeq" id="WP_012230518.1">
    <property type="nucleotide sequence ID" value="NC_010161.1"/>
</dbReference>
<dbReference type="SMR" id="A9IMA6"/>
<dbReference type="KEGG" id="btr:BT_0172"/>
<dbReference type="eggNOG" id="COG0536">
    <property type="taxonomic scope" value="Bacteria"/>
</dbReference>
<dbReference type="HOGENOM" id="CLU_011747_2_0_5"/>
<dbReference type="Proteomes" id="UP000001592">
    <property type="component" value="Chromosome"/>
</dbReference>
<dbReference type="GO" id="GO:0005737">
    <property type="term" value="C:cytoplasm"/>
    <property type="evidence" value="ECO:0007669"/>
    <property type="project" value="UniProtKB-SubCell"/>
</dbReference>
<dbReference type="GO" id="GO:0005525">
    <property type="term" value="F:GTP binding"/>
    <property type="evidence" value="ECO:0007669"/>
    <property type="project" value="UniProtKB-UniRule"/>
</dbReference>
<dbReference type="GO" id="GO:0003924">
    <property type="term" value="F:GTPase activity"/>
    <property type="evidence" value="ECO:0007669"/>
    <property type="project" value="UniProtKB-UniRule"/>
</dbReference>
<dbReference type="GO" id="GO:0000287">
    <property type="term" value="F:magnesium ion binding"/>
    <property type="evidence" value="ECO:0007669"/>
    <property type="project" value="InterPro"/>
</dbReference>
<dbReference type="GO" id="GO:0042254">
    <property type="term" value="P:ribosome biogenesis"/>
    <property type="evidence" value="ECO:0007669"/>
    <property type="project" value="UniProtKB-UniRule"/>
</dbReference>
<dbReference type="CDD" id="cd01898">
    <property type="entry name" value="Obg"/>
    <property type="match status" value="1"/>
</dbReference>
<dbReference type="FunFam" id="2.70.210.12:FF:000001">
    <property type="entry name" value="GTPase Obg"/>
    <property type="match status" value="1"/>
</dbReference>
<dbReference type="Gene3D" id="2.70.210.12">
    <property type="entry name" value="GTP1/OBG domain"/>
    <property type="match status" value="1"/>
</dbReference>
<dbReference type="Gene3D" id="3.40.50.300">
    <property type="entry name" value="P-loop containing nucleotide triphosphate hydrolases"/>
    <property type="match status" value="1"/>
</dbReference>
<dbReference type="HAMAP" id="MF_01454">
    <property type="entry name" value="GTPase_Obg"/>
    <property type="match status" value="1"/>
</dbReference>
<dbReference type="InterPro" id="IPR031167">
    <property type="entry name" value="G_OBG"/>
</dbReference>
<dbReference type="InterPro" id="IPR006073">
    <property type="entry name" value="GTP-bd"/>
</dbReference>
<dbReference type="InterPro" id="IPR014100">
    <property type="entry name" value="GTP-bd_Obg/CgtA"/>
</dbReference>
<dbReference type="InterPro" id="IPR006074">
    <property type="entry name" value="GTP1-OBG_CS"/>
</dbReference>
<dbReference type="InterPro" id="IPR006169">
    <property type="entry name" value="GTP1_OBG_dom"/>
</dbReference>
<dbReference type="InterPro" id="IPR036726">
    <property type="entry name" value="GTP1_OBG_dom_sf"/>
</dbReference>
<dbReference type="InterPro" id="IPR045086">
    <property type="entry name" value="OBG_GTPase"/>
</dbReference>
<dbReference type="InterPro" id="IPR027417">
    <property type="entry name" value="P-loop_NTPase"/>
</dbReference>
<dbReference type="InterPro" id="IPR005225">
    <property type="entry name" value="Small_GTP-bd"/>
</dbReference>
<dbReference type="NCBIfam" id="TIGR02729">
    <property type="entry name" value="Obg_CgtA"/>
    <property type="match status" value="1"/>
</dbReference>
<dbReference type="NCBIfam" id="NF008955">
    <property type="entry name" value="PRK12297.1"/>
    <property type="match status" value="1"/>
</dbReference>
<dbReference type="NCBIfam" id="NF008956">
    <property type="entry name" value="PRK12299.1"/>
    <property type="match status" value="1"/>
</dbReference>
<dbReference type="NCBIfam" id="TIGR00231">
    <property type="entry name" value="small_GTP"/>
    <property type="match status" value="1"/>
</dbReference>
<dbReference type="PANTHER" id="PTHR11702">
    <property type="entry name" value="DEVELOPMENTALLY REGULATED GTP-BINDING PROTEIN-RELATED"/>
    <property type="match status" value="1"/>
</dbReference>
<dbReference type="PANTHER" id="PTHR11702:SF31">
    <property type="entry name" value="MITOCHONDRIAL RIBOSOME-ASSOCIATED GTPASE 2"/>
    <property type="match status" value="1"/>
</dbReference>
<dbReference type="Pfam" id="PF01018">
    <property type="entry name" value="GTP1_OBG"/>
    <property type="match status" value="1"/>
</dbReference>
<dbReference type="Pfam" id="PF01926">
    <property type="entry name" value="MMR_HSR1"/>
    <property type="match status" value="1"/>
</dbReference>
<dbReference type="PIRSF" id="PIRSF002401">
    <property type="entry name" value="GTP_bd_Obg/CgtA"/>
    <property type="match status" value="1"/>
</dbReference>
<dbReference type="PRINTS" id="PR00326">
    <property type="entry name" value="GTP1OBG"/>
</dbReference>
<dbReference type="SUPFAM" id="SSF82051">
    <property type="entry name" value="Obg GTP-binding protein N-terminal domain"/>
    <property type="match status" value="1"/>
</dbReference>
<dbReference type="SUPFAM" id="SSF52540">
    <property type="entry name" value="P-loop containing nucleoside triphosphate hydrolases"/>
    <property type="match status" value="1"/>
</dbReference>
<dbReference type="PROSITE" id="PS51710">
    <property type="entry name" value="G_OBG"/>
    <property type="match status" value="1"/>
</dbReference>
<dbReference type="PROSITE" id="PS00905">
    <property type="entry name" value="GTP1_OBG"/>
    <property type="match status" value="1"/>
</dbReference>
<dbReference type="PROSITE" id="PS51883">
    <property type="entry name" value="OBG"/>
    <property type="match status" value="1"/>
</dbReference>
<keyword id="KW-0963">Cytoplasm</keyword>
<keyword id="KW-0342">GTP-binding</keyword>
<keyword id="KW-0378">Hydrolase</keyword>
<keyword id="KW-0460">Magnesium</keyword>
<keyword id="KW-0479">Metal-binding</keyword>
<keyword id="KW-0547">Nucleotide-binding</keyword>
<sequence length="341" mass="37163">MKFLDQAKVYIRSGNGGSGAVSFRREKFIEFGGPDGGNGGRGGDVWALVVDGLNTLIDYRYQQHFKAKTGGHGKGRNMTGEKGGDVILKVPVGTQIFEEDNTTLICDLTEVGQRYRLAKGGNGGFGNLHFTTSTNRAPRRANPGLAGEERAIWLRLKLIADAGLVGLPNAGKSTFLSSVTAAKPKVADYPFTTLHPHLGVVRIDGREFVLADIPGLIEGAHEGVGIGDRFLGHVERCRVLLHLISAQEEDVAKAYQIVRHELEAYGNNLSDKTEIVALSQIDTLTIEERKMKQKALRRVTDQPVMMFSAVSREGLENVLRAGAHIIEMSRKEEMGGDSRID</sequence>
<feature type="chain" id="PRO_0000385738" description="GTPase Obg">
    <location>
        <begin position="1"/>
        <end position="341"/>
    </location>
</feature>
<feature type="domain" description="Obg" evidence="2">
    <location>
        <begin position="1"/>
        <end position="159"/>
    </location>
</feature>
<feature type="domain" description="OBG-type G" evidence="1">
    <location>
        <begin position="160"/>
        <end position="327"/>
    </location>
</feature>
<feature type="binding site" evidence="1">
    <location>
        <begin position="166"/>
        <end position="173"/>
    </location>
    <ligand>
        <name>GTP</name>
        <dbReference type="ChEBI" id="CHEBI:37565"/>
    </ligand>
</feature>
<feature type="binding site" evidence="1">
    <location>
        <position position="173"/>
    </location>
    <ligand>
        <name>Mg(2+)</name>
        <dbReference type="ChEBI" id="CHEBI:18420"/>
    </ligand>
</feature>
<feature type="binding site" evidence="1">
    <location>
        <begin position="191"/>
        <end position="195"/>
    </location>
    <ligand>
        <name>GTP</name>
        <dbReference type="ChEBI" id="CHEBI:37565"/>
    </ligand>
</feature>
<feature type="binding site" evidence="1">
    <location>
        <position position="193"/>
    </location>
    <ligand>
        <name>Mg(2+)</name>
        <dbReference type="ChEBI" id="CHEBI:18420"/>
    </ligand>
</feature>
<feature type="binding site" evidence="1">
    <location>
        <begin position="212"/>
        <end position="215"/>
    </location>
    <ligand>
        <name>GTP</name>
        <dbReference type="ChEBI" id="CHEBI:37565"/>
    </ligand>
</feature>
<feature type="binding site" evidence="1">
    <location>
        <begin position="279"/>
        <end position="282"/>
    </location>
    <ligand>
        <name>GTP</name>
        <dbReference type="ChEBI" id="CHEBI:37565"/>
    </ligand>
</feature>
<feature type="binding site" evidence="1">
    <location>
        <begin position="308"/>
        <end position="310"/>
    </location>
    <ligand>
        <name>GTP</name>
        <dbReference type="ChEBI" id="CHEBI:37565"/>
    </ligand>
</feature>
<comment type="function">
    <text evidence="1">An essential GTPase which binds GTP, GDP and possibly (p)ppGpp with moderate affinity, with high nucleotide exchange rates and a fairly low GTP hydrolysis rate. Plays a role in control of the cell cycle, stress response, ribosome biogenesis and in those bacteria that undergo differentiation, in morphogenesis control.</text>
</comment>
<comment type="cofactor">
    <cofactor evidence="1">
        <name>Mg(2+)</name>
        <dbReference type="ChEBI" id="CHEBI:18420"/>
    </cofactor>
</comment>
<comment type="subunit">
    <text evidence="1">Monomer.</text>
</comment>
<comment type="subcellular location">
    <subcellularLocation>
        <location evidence="1">Cytoplasm</location>
    </subcellularLocation>
</comment>
<comment type="similarity">
    <text evidence="1">Belongs to the TRAFAC class OBG-HflX-like GTPase superfamily. OBG GTPase family.</text>
</comment>